<comment type="subcellular location">
    <subcellularLocation>
        <location evidence="4">Secreted</location>
    </subcellularLocation>
</comment>
<comment type="alternative products">
    <event type="alternative splicing"/>
    <isoform>
        <id>Q94CH7-1</id>
        <name>1</name>
        <sequence type="displayed"/>
    </isoform>
    <isoform>
        <id>Q94CH7-2</id>
        <name>2</name>
        <sequence type="described" ref="VSP_036682"/>
    </isoform>
</comment>
<comment type="similarity">
    <text evidence="4">Belongs to the 'GDSL' lipolytic enzyme family.</text>
</comment>
<comment type="sequence caution" evidence="4">
    <conflict type="erroneous gene model prediction">
        <sequence resource="EMBL-CDS" id="AAF79814"/>
    </conflict>
    <text>The predicted gene At1g75880 has been split into 2 genes: At1g75880 and At1g75890.</text>
</comment>
<comment type="sequence caution" evidence="4">
    <conflict type="miscellaneous discrepancy">
        <sequence resource="EMBL-CDS" id="ABK28470"/>
    </conflict>
    <text>Sequencing errors.</text>
</comment>
<proteinExistence type="evidence at transcript level"/>
<feature type="signal peptide" evidence="2">
    <location>
        <begin position="1"/>
        <end position="35"/>
    </location>
</feature>
<feature type="chain" id="PRO_0000367329" description="GDSL esterase/lipase EXL2">
    <location>
        <begin position="36"/>
        <end position="379"/>
    </location>
</feature>
<feature type="active site" description="Nucleophile" evidence="1">
    <location>
        <position position="54"/>
    </location>
</feature>
<feature type="active site" evidence="1">
    <location>
        <position position="358"/>
    </location>
</feature>
<feature type="active site" evidence="1">
    <location>
        <position position="361"/>
    </location>
</feature>
<feature type="glycosylation site" description="N-linked (GlcNAc...) asparagine" evidence="2">
    <location>
        <position position="42"/>
    </location>
</feature>
<feature type="splice variant" id="VSP_036682" description="In isoform 2." evidence="3">
    <location>
        <begin position="144"/>
        <end position="156"/>
    </location>
</feature>
<keyword id="KW-0025">Alternative splicing</keyword>
<keyword id="KW-0325">Glycoprotein</keyword>
<keyword id="KW-0378">Hydrolase</keyword>
<keyword id="KW-0442">Lipid degradation</keyword>
<keyword id="KW-0443">Lipid metabolism</keyword>
<keyword id="KW-1185">Reference proteome</keyword>
<keyword id="KW-0964">Secreted</keyword>
<keyword id="KW-0732">Signal</keyword>
<gene>
    <name type="primary">EXL2</name>
    <name type="ordered locus">At1g75890</name>
    <name type="ORF">T4O12.240</name>
</gene>
<accession>Q94CH7</accession>
<accession>A0MEG6</accession>
<accession>Q1PFC9</accession>
<accession>Q9LQS6</accession>
<dbReference type="EC" id="3.1.1.-"/>
<dbReference type="EMBL" id="AY028610">
    <property type="protein sequence ID" value="AAK30017.1"/>
    <property type="molecule type" value="mRNA"/>
</dbReference>
<dbReference type="EMBL" id="AC007396">
    <property type="protein sequence ID" value="AAF79814.1"/>
    <property type="status" value="ALT_SEQ"/>
    <property type="molecule type" value="Genomic_DNA"/>
</dbReference>
<dbReference type="EMBL" id="CP002684">
    <property type="protein sequence ID" value="AEE35770.1"/>
    <property type="molecule type" value="Genomic_DNA"/>
</dbReference>
<dbReference type="EMBL" id="CP002684">
    <property type="protein sequence ID" value="AEE35771.1"/>
    <property type="molecule type" value="Genomic_DNA"/>
</dbReference>
<dbReference type="EMBL" id="DQ446434">
    <property type="protein sequence ID" value="ABE65777.1"/>
    <property type="molecule type" value="mRNA"/>
</dbReference>
<dbReference type="EMBL" id="DQ652936">
    <property type="protein sequence ID" value="ABK28470.1"/>
    <property type="status" value="ALT_SEQ"/>
    <property type="molecule type" value="mRNA"/>
</dbReference>
<dbReference type="RefSeq" id="NP_001077829.1">
    <molecule id="Q94CH7-2"/>
    <property type="nucleotide sequence ID" value="NM_001084360.1"/>
</dbReference>
<dbReference type="RefSeq" id="NP_565121.1">
    <molecule id="Q94CH7-1"/>
    <property type="nucleotide sequence ID" value="NM_106239.2"/>
</dbReference>
<dbReference type="SMR" id="Q94CH7"/>
<dbReference type="FunCoup" id="Q94CH7">
    <property type="interactions" value="93"/>
</dbReference>
<dbReference type="STRING" id="3702.Q94CH7"/>
<dbReference type="GlyCosmos" id="Q94CH7">
    <property type="glycosylation" value="1 site, No reported glycans"/>
</dbReference>
<dbReference type="GlyGen" id="Q94CH7">
    <property type="glycosylation" value="1 site"/>
</dbReference>
<dbReference type="iPTMnet" id="Q94CH7"/>
<dbReference type="PaxDb" id="3702-AT1G75890.1"/>
<dbReference type="ProteomicsDB" id="221813">
    <molecule id="Q94CH7-1"/>
</dbReference>
<dbReference type="EnsemblPlants" id="AT1G75890.1">
    <molecule id="Q94CH7-1"/>
    <property type="protein sequence ID" value="AT1G75890.1"/>
    <property type="gene ID" value="AT1G75890"/>
</dbReference>
<dbReference type="EnsemblPlants" id="AT1G75890.2">
    <molecule id="Q94CH7-2"/>
    <property type="protein sequence ID" value="AT1G75890.2"/>
    <property type="gene ID" value="AT1G75890"/>
</dbReference>
<dbReference type="GeneID" id="843922"/>
<dbReference type="Gramene" id="AT1G75890.1">
    <molecule id="Q94CH7-1"/>
    <property type="protein sequence ID" value="AT1G75890.1"/>
    <property type="gene ID" value="AT1G75890"/>
</dbReference>
<dbReference type="Gramene" id="AT1G75890.2">
    <molecule id="Q94CH7-2"/>
    <property type="protein sequence ID" value="AT1G75890.2"/>
    <property type="gene ID" value="AT1G75890"/>
</dbReference>
<dbReference type="KEGG" id="ath:AT1G75890"/>
<dbReference type="Araport" id="AT1G75890"/>
<dbReference type="TAIR" id="AT1G75890"/>
<dbReference type="eggNOG" id="ENOG502QW19">
    <property type="taxonomic scope" value="Eukaryota"/>
</dbReference>
<dbReference type="InParanoid" id="Q94CH7"/>
<dbReference type="PhylomeDB" id="Q94CH7"/>
<dbReference type="PRO" id="PR:Q94CH7"/>
<dbReference type="Proteomes" id="UP000006548">
    <property type="component" value="Chromosome 1"/>
</dbReference>
<dbReference type="ExpressionAtlas" id="Q94CH7">
    <property type="expression patterns" value="baseline and differential"/>
</dbReference>
<dbReference type="GO" id="GO:0005576">
    <property type="term" value="C:extracellular region"/>
    <property type="evidence" value="ECO:0007669"/>
    <property type="project" value="UniProtKB-SubCell"/>
</dbReference>
<dbReference type="GO" id="GO:0016298">
    <property type="term" value="F:lipase activity"/>
    <property type="evidence" value="ECO:0007669"/>
    <property type="project" value="InterPro"/>
</dbReference>
<dbReference type="GO" id="GO:0016042">
    <property type="term" value="P:lipid catabolic process"/>
    <property type="evidence" value="ECO:0007669"/>
    <property type="project" value="UniProtKB-KW"/>
</dbReference>
<dbReference type="CDD" id="cd01837">
    <property type="entry name" value="SGNH_plant_lipase_like"/>
    <property type="match status" value="1"/>
</dbReference>
<dbReference type="FunFam" id="3.40.50.1110:FF:000003">
    <property type="entry name" value="GDSL esterase/lipase APG"/>
    <property type="match status" value="1"/>
</dbReference>
<dbReference type="Gene3D" id="3.40.50.1110">
    <property type="entry name" value="SGNH hydrolase"/>
    <property type="match status" value="1"/>
</dbReference>
<dbReference type="InterPro" id="IPR001087">
    <property type="entry name" value="GDSL"/>
</dbReference>
<dbReference type="InterPro" id="IPR050592">
    <property type="entry name" value="GDSL_lipolytic_enzyme"/>
</dbReference>
<dbReference type="InterPro" id="IPR008265">
    <property type="entry name" value="Lipase_GDSL_AS"/>
</dbReference>
<dbReference type="InterPro" id="IPR036514">
    <property type="entry name" value="SGNH_hydro_sf"/>
</dbReference>
<dbReference type="InterPro" id="IPR035669">
    <property type="entry name" value="SGNH_plant_lipase-like"/>
</dbReference>
<dbReference type="PANTHER" id="PTHR45642">
    <property type="entry name" value="GDSL ESTERASE/LIPASE EXL3"/>
    <property type="match status" value="1"/>
</dbReference>
<dbReference type="PANTHER" id="PTHR45642:SF135">
    <property type="entry name" value="GDSL ESTERASE_LIPASE EXL2"/>
    <property type="match status" value="1"/>
</dbReference>
<dbReference type="Pfam" id="PF00657">
    <property type="entry name" value="Lipase_GDSL"/>
    <property type="match status" value="1"/>
</dbReference>
<dbReference type="SUPFAM" id="SSF52266">
    <property type="entry name" value="SGNH hydrolase"/>
    <property type="match status" value="1"/>
</dbReference>
<dbReference type="PROSITE" id="PS01098">
    <property type="entry name" value="LIPASE_GDSL_SER"/>
    <property type="match status" value="1"/>
</dbReference>
<name>EXL2_ARATH</name>
<protein>
    <recommendedName>
        <fullName>GDSL esterase/lipase EXL2</fullName>
        <ecNumber>3.1.1.-</ecNumber>
    </recommendedName>
    <alternativeName>
        <fullName>Family II extracellular lipase 2</fullName>
        <shortName>Family II lipase EXL2</shortName>
    </alternativeName>
</protein>
<evidence type="ECO:0000250" key="1"/>
<evidence type="ECO:0000255" key="2"/>
<evidence type="ECO:0000303" key="3">
    <source>
    </source>
</evidence>
<evidence type="ECO:0000305" key="4"/>
<reference key="1">
    <citation type="journal article" date="2001" name="Science">
        <title>Gene families from the Arabidopsis thaliana pollen coat proteome.</title>
        <authorList>
            <person name="Mayfield J.A."/>
            <person name="Fiebig A."/>
            <person name="Johnstone S.E."/>
            <person name="Preuss D."/>
        </authorList>
    </citation>
    <scope>NUCLEOTIDE SEQUENCE [MRNA] (ISOFORM 1)</scope>
</reference>
<reference key="2">
    <citation type="journal article" date="2000" name="Nature">
        <title>Sequence and analysis of chromosome 1 of the plant Arabidopsis thaliana.</title>
        <authorList>
            <person name="Theologis A."/>
            <person name="Ecker J.R."/>
            <person name="Palm C.J."/>
            <person name="Federspiel N.A."/>
            <person name="Kaul S."/>
            <person name="White O."/>
            <person name="Alonso J."/>
            <person name="Altafi H."/>
            <person name="Araujo R."/>
            <person name="Bowman C.L."/>
            <person name="Brooks S.Y."/>
            <person name="Buehler E."/>
            <person name="Chan A."/>
            <person name="Chao Q."/>
            <person name="Chen H."/>
            <person name="Cheuk R.F."/>
            <person name="Chin C.W."/>
            <person name="Chung M.K."/>
            <person name="Conn L."/>
            <person name="Conway A.B."/>
            <person name="Conway A.R."/>
            <person name="Creasy T.H."/>
            <person name="Dewar K."/>
            <person name="Dunn P."/>
            <person name="Etgu P."/>
            <person name="Feldblyum T.V."/>
            <person name="Feng J.-D."/>
            <person name="Fong B."/>
            <person name="Fujii C.Y."/>
            <person name="Gill J.E."/>
            <person name="Goldsmith A.D."/>
            <person name="Haas B."/>
            <person name="Hansen N.F."/>
            <person name="Hughes B."/>
            <person name="Huizar L."/>
            <person name="Hunter J.L."/>
            <person name="Jenkins J."/>
            <person name="Johnson-Hopson C."/>
            <person name="Khan S."/>
            <person name="Khaykin E."/>
            <person name="Kim C.J."/>
            <person name="Koo H.L."/>
            <person name="Kremenetskaia I."/>
            <person name="Kurtz D.B."/>
            <person name="Kwan A."/>
            <person name="Lam B."/>
            <person name="Langin-Hooper S."/>
            <person name="Lee A."/>
            <person name="Lee J.M."/>
            <person name="Lenz C.A."/>
            <person name="Li J.H."/>
            <person name="Li Y.-P."/>
            <person name="Lin X."/>
            <person name="Liu S.X."/>
            <person name="Liu Z.A."/>
            <person name="Luros J.S."/>
            <person name="Maiti R."/>
            <person name="Marziali A."/>
            <person name="Militscher J."/>
            <person name="Miranda M."/>
            <person name="Nguyen M."/>
            <person name="Nierman W.C."/>
            <person name="Osborne B.I."/>
            <person name="Pai G."/>
            <person name="Peterson J."/>
            <person name="Pham P.K."/>
            <person name="Rizzo M."/>
            <person name="Rooney T."/>
            <person name="Rowley D."/>
            <person name="Sakano H."/>
            <person name="Salzberg S.L."/>
            <person name="Schwartz J.R."/>
            <person name="Shinn P."/>
            <person name="Southwick A.M."/>
            <person name="Sun H."/>
            <person name="Tallon L.J."/>
            <person name="Tambunga G."/>
            <person name="Toriumi M.J."/>
            <person name="Town C.D."/>
            <person name="Utterback T."/>
            <person name="Van Aken S."/>
            <person name="Vaysberg M."/>
            <person name="Vysotskaia V.S."/>
            <person name="Walker M."/>
            <person name="Wu D."/>
            <person name="Yu G."/>
            <person name="Fraser C.M."/>
            <person name="Venter J.C."/>
            <person name="Davis R.W."/>
        </authorList>
    </citation>
    <scope>NUCLEOTIDE SEQUENCE [LARGE SCALE GENOMIC DNA]</scope>
    <source>
        <strain>cv. Columbia</strain>
    </source>
</reference>
<reference key="3">
    <citation type="journal article" date="2017" name="Plant J.">
        <title>Araport11: a complete reannotation of the Arabidopsis thaliana reference genome.</title>
        <authorList>
            <person name="Cheng C.Y."/>
            <person name="Krishnakumar V."/>
            <person name="Chan A.P."/>
            <person name="Thibaud-Nissen F."/>
            <person name="Schobel S."/>
            <person name="Town C.D."/>
        </authorList>
    </citation>
    <scope>GENOME REANNOTATION</scope>
    <source>
        <strain>cv. Columbia</strain>
    </source>
</reference>
<reference key="4">
    <citation type="journal article" date="2006" name="Plant Biotechnol. J.">
        <title>Simultaneous high-throughput recombinational cloning of open reading frames in closed and open configurations.</title>
        <authorList>
            <person name="Underwood B.A."/>
            <person name="Vanderhaeghen R."/>
            <person name="Whitford R."/>
            <person name="Town C.D."/>
            <person name="Hilson P."/>
        </authorList>
    </citation>
    <scope>NUCLEOTIDE SEQUENCE [LARGE SCALE MRNA] (ISOFORM 2)</scope>
    <source>
        <strain>cv. Columbia</strain>
    </source>
</reference>
<reference key="5">
    <citation type="journal article" date="2004" name="Prog. Lipid Res.">
        <title>GDSL family of serine esterases/lipases.</title>
        <authorList>
            <person name="Akoh C.C."/>
            <person name="Lee G.-C."/>
            <person name="Liaw Y.-C."/>
            <person name="Huang T.-H."/>
            <person name="Shaw J.-F."/>
        </authorList>
    </citation>
    <scope>REVIEW</scope>
</reference>
<reference key="6">
    <citation type="journal article" date="2008" name="Pak. J. Biol. Sci.">
        <title>Sequence analysis of GDSL lipase gene family in Arabidopsis thaliana.</title>
        <authorList>
            <person name="Ling H."/>
        </authorList>
    </citation>
    <scope>GENE FAMILY</scope>
</reference>
<organism>
    <name type="scientific">Arabidopsis thaliana</name>
    <name type="common">Mouse-ear cress</name>
    <dbReference type="NCBI Taxonomy" id="3702"/>
    <lineage>
        <taxon>Eukaryota</taxon>
        <taxon>Viridiplantae</taxon>
        <taxon>Streptophyta</taxon>
        <taxon>Embryophyta</taxon>
        <taxon>Tracheophyta</taxon>
        <taxon>Spermatophyta</taxon>
        <taxon>Magnoliopsida</taxon>
        <taxon>eudicotyledons</taxon>
        <taxon>Gunneridae</taxon>
        <taxon>Pentapetalae</taxon>
        <taxon>rosids</taxon>
        <taxon>malvids</taxon>
        <taxon>Brassicales</taxon>
        <taxon>Brassicaceae</taxon>
        <taxon>Camelineae</taxon>
        <taxon>Arabidopsis</taxon>
    </lineage>
</organism>
<sequence>MKRNSINIHHVTSFSSSPFWCVFFLVLLCKTSTNALVKQPPNETTPAIIVFGDSIVDAGNNDDIMTTLARCNYPPYGIDFDGGIPTGRFCNGKVATDFIAGKFGIKPSIPAYRNPNLKPEDLLTGVTFASGGAGYVPFTTQLSTYLFIYKPLLFLKGGIALSQQLKLFEEYVEKMKKMVGEERTKLIIKNSLFMVICGSNDITNTYFGLPSVQQQYDVASFTTLMADNARSFAQKLHEYGARRIQVFGAPPVGCVPSQRTLAGGPTRNCVVRFNDATKLYNVKLAANLGSLSRTLGDKTIIYVDIYDSLLDIILDPRQYGFKVVDKGCCGTGLIEVALLCNNFAADVCPNRDEYVFWDSFHPTEKTYRIMATKYFERYV</sequence>